<organism>
    <name type="scientific">Buchnera aphidicola subsp. Baizongia pistaciae (strain Bp)</name>
    <dbReference type="NCBI Taxonomy" id="224915"/>
    <lineage>
        <taxon>Bacteria</taxon>
        <taxon>Pseudomonadati</taxon>
        <taxon>Pseudomonadota</taxon>
        <taxon>Gammaproteobacteria</taxon>
        <taxon>Enterobacterales</taxon>
        <taxon>Erwiniaceae</taxon>
        <taxon>Buchnera</taxon>
    </lineage>
</organism>
<proteinExistence type="inferred from homology"/>
<accession>Q89AD8</accession>
<name>GSH1_BUCBP</name>
<gene>
    <name type="primary">gshA</name>
    <name type="ordered locus">bbp_368</name>
</gene>
<protein>
    <recommendedName>
        <fullName>Glutamate--cysteine ligase</fullName>
        <ecNumber>6.3.2.2</ecNumber>
    </recommendedName>
    <alternativeName>
        <fullName>Gamma-ECS</fullName>
        <shortName>GCS</shortName>
    </alternativeName>
    <alternativeName>
        <fullName>Gamma-glutamylcysteine synthetase</fullName>
    </alternativeName>
</protein>
<comment type="catalytic activity">
    <reaction>
        <text>L-cysteine + L-glutamate + ATP = gamma-L-glutamyl-L-cysteine + ADP + phosphate + H(+)</text>
        <dbReference type="Rhea" id="RHEA:13285"/>
        <dbReference type="ChEBI" id="CHEBI:15378"/>
        <dbReference type="ChEBI" id="CHEBI:29985"/>
        <dbReference type="ChEBI" id="CHEBI:30616"/>
        <dbReference type="ChEBI" id="CHEBI:35235"/>
        <dbReference type="ChEBI" id="CHEBI:43474"/>
        <dbReference type="ChEBI" id="CHEBI:58173"/>
        <dbReference type="ChEBI" id="CHEBI:456216"/>
        <dbReference type="EC" id="6.3.2.2"/>
    </reaction>
</comment>
<comment type="pathway">
    <text>Sulfur metabolism; glutathione biosynthesis; glutathione from L-cysteine and L-glutamate: step 1/2.</text>
</comment>
<comment type="similarity">
    <text evidence="1">Belongs to the glutamate--cysteine ligase type 1 family. Type 1 subfamily.</text>
</comment>
<keyword id="KW-0067">ATP-binding</keyword>
<keyword id="KW-0317">Glutathione biosynthesis</keyword>
<keyword id="KW-0436">Ligase</keyword>
<keyword id="KW-0547">Nucleotide-binding</keyword>
<keyword id="KW-1185">Reference proteome</keyword>
<dbReference type="EC" id="6.3.2.2"/>
<dbReference type="EMBL" id="AE016826">
    <property type="protein sequence ID" value="AAO27085.1"/>
    <property type="molecule type" value="Genomic_DNA"/>
</dbReference>
<dbReference type="RefSeq" id="WP_011091486.1">
    <property type="nucleotide sequence ID" value="NC_004545.1"/>
</dbReference>
<dbReference type="SMR" id="Q89AD8"/>
<dbReference type="STRING" id="224915.bbp_368"/>
<dbReference type="KEGG" id="bab:bbp_368"/>
<dbReference type="eggNOG" id="COG2918">
    <property type="taxonomic scope" value="Bacteria"/>
</dbReference>
<dbReference type="HOGENOM" id="CLU_020728_3_0_6"/>
<dbReference type="OrthoDB" id="9803907at2"/>
<dbReference type="UniPathway" id="UPA00142">
    <property type="reaction ID" value="UER00209"/>
</dbReference>
<dbReference type="Proteomes" id="UP000000601">
    <property type="component" value="Chromosome"/>
</dbReference>
<dbReference type="GO" id="GO:0005829">
    <property type="term" value="C:cytosol"/>
    <property type="evidence" value="ECO:0007669"/>
    <property type="project" value="TreeGrafter"/>
</dbReference>
<dbReference type="GO" id="GO:0005524">
    <property type="term" value="F:ATP binding"/>
    <property type="evidence" value="ECO:0007669"/>
    <property type="project" value="UniProtKB-KW"/>
</dbReference>
<dbReference type="GO" id="GO:0004357">
    <property type="term" value="F:glutamate-cysteine ligase activity"/>
    <property type="evidence" value="ECO:0007669"/>
    <property type="project" value="UniProtKB-UniRule"/>
</dbReference>
<dbReference type="GO" id="GO:0046872">
    <property type="term" value="F:metal ion binding"/>
    <property type="evidence" value="ECO:0007669"/>
    <property type="project" value="TreeGrafter"/>
</dbReference>
<dbReference type="GO" id="GO:0006750">
    <property type="term" value="P:glutathione biosynthetic process"/>
    <property type="evidence" value="ECO:0007669"/>
    <property type="project" value="UniProtKB-UniRule"/>
</dbReference>
<dbReference type="Gene3D" id="3.30.590.20">
    <property type="match status" value="1"/>
</dbReference>
<dbReference type="HAMAP" id="MF_00578">
    <property type="entry name" value="Glu_cys_ligase"/>
    <property type="match status" value="1"/>
</dbReference>
<dbReference type="InterPro" id="IPR014746">
    <property type="entry name" value="Gln_synth/guanido_kin_cat_dom"/>
</dbReference>
<dbReference type="InterPro" id="IPR007370">
    <property type="entry name" value="Glu_cys_ligase"/>
</dbReference>
<dbReference type="InterPro" id="IPR006334">
    <property type="entry name" value="Glut_cys_ligase"/>
</dbReference>
<dbReference type="NCBIfam" id="TIGR01434">
    <property type="entry name" value="glu_cys_ligase"/>
    <property type="match status" value="1"/>
</dbReference>
<dbReference type="PANTHER" id="PTHR38761">
    <property type="entry name" value="GLUTAMATE--CYSTEINE LIGASE"/>
    <property type="match status" value="1"/>
</dbReference>
<dbReference type="PANTHER" id="PTHR38761:SF1">
    <property type="entry name" value="GLUTAMATE--CYSTEINE LIGASE"/>
    <property type="match status" value="1"/>
</dbReference>
<dbReference type="Pfam" id="PF04262">
    <property type="entry name" value="Glu_cys_ligase"/>
    <property type="match status" value="1"/>
</dbReference>
<dbReference type="SUPFAM" id="SSF55931">
    <property type="entry name" value="Glutamine synthetase/guanido kinase"/>
    <property type="match status" value="1"/>
</dbReference>
<evidence type="ECO:0000305" key="1"/>
<sequence length="521" mass="61433">MIPKIYKKIKWLQSNPLILKKILRGIEREALRTDIHGTIINTAYPQDKIGSALTHKWITTDFSESLLEFITPTNASTNYILKFLNDTHKFVNDNLIQEYFWPFSIPPCKKYMHSIKLSKYGTSNLGQVKTLYRKGLKHRYGILMNIISGVHYNFSLPRIFWNHWKKIHHKNTQYNTTSEGYLCLIRNYYKFGWIIPYLFGASPAVEPLFIKNKKHNYKFKKHHGMLYLPWSTSLRLSDLGHTNQSIKKLKLTFNSLSEYVLALEHGIKTPSKQFKNLGLYDQFGNFKQINTNLLQTENELYTYIRPKQKLKNCESLSAALRNRGIEYVEIRALDINPFTSTGVDKNQILLLDLFLIWCVLADSPKISSQEFHFFLKNWHTIITKGRKPKQKININIYNTKNTIQTIGKTILYDLFYIAEILDSLSNNNNYQETCKNLILYFDYPELTYSEKLLNKFMCYGIYETGANLFVKYKQKLHNDSFKILSKKDLNNEMMKSNNSQKLIEKQDTLNFKEYLNLYYTK</sequence>
<feature type="chain" id="PRO_0000192522" description="Glutamate--cysteine ligase">
    <location>
        <begin position="1"/>
        <end position="521"/>
    </location>
</feature>
<reference key="1">
    <citation type="journal article" date="2003" name="Proc. Natl. Acad. Sci. U.S.A.">
        <title>Reductive genome evolution in Buchnera aphidicola.</title>
        <authorList>
            <person name="van Ham R.C.H.J."/>
            <person name="Kamerbeek J."/>
            <person name="Palacios C."/>
            <person name="Rausell C."/>
            <person name="Abascal F."/>
            <person name="Bastolla U."/>
            <person name="Fernandez J.M."/>
            <person name="Jimenez L."/>
            <person name="Postigo M."/>
            <person name="Silva F.J."/>
            <person name="Tamames J."/>
            <person name="Viguera E."/>
            <person name="Latorre A."/>
            <person name="Valencia A."/>
            <person name="Moran F."/>
            <person name="Moya A."/>
        </authorList>
    </citation>
    <scope>NUCLEOTIDE SEQUENCE [LARGE SCALE GENOMIC DNA]</scope>
    <source>
        <strain>Bp</strain>
    </source>
</reference>